<gene>
    <name evidence="1" type="primary">nuoN</name>
    <name type="ordered locus">MXAN_1080</name>
</gene>
<feature type="chain" id="PRO_0000391184" description="NADH-quinone oxidoreductase subunit N">
    <location>
        <begin position="1"/>
        <end position="519"/>
    </location>
</feature>
<feature type="transmembrane region" description="Helical" evidence="1">
    <location>
        <begin position="14"/>
        <end position="34"/>
    </location>
</feature>
<feature type="transmembrane region" description="Helical" evidence="1">
    <location>
        <begin position="44"/>
        <end position="64"/>
    </location>
</feature>
<feature type="transmembrane region" description="Helical" evidence="1">
    <location>
        <begin position="82"/>
        <end position="102"/>
    </location>
</feature>
<feature type="transmembrane region" description="Helical" evidence="1">
    <location>
        <begin position="117"/>
        <end position="137"/>
    </location>
</feature>
<feature type="transmembrane region" description="Helical" evidence="1">
    <location>
        <begin position="167"/>
        <end position="187"/>
    </location>
</feature>
<feature type="transmembrane region" description="Helical" evidence="1">
    <location>
        <begin position="209"/>
        <end position="229"/>
    </location>
</feature>
<feature type="transmembrane region" description="Helical" evidence="1">
    <location>
        <begin position="249"/>
        <end position="269"/>
    </location>
</feature>
<feature type="transmembrane region" description="Helical" evidence="1">
    <location>
        <begin position="278"/>
        <end position="298"/>
    </location>
</feature>
<feature type="transmembrane region" description="Helical" evidence="1">
    <location>
        <begin position="307"/>
        <end position="327"/>
    </location>
</feature>
<feature type="transmembrane region" description="Helical" evidence="1">
    <location>
        <begin position="359"/>
        <end position="379"/>
    </location>
</feature>
<feature type="transmembrane region" description="Helical" evidence="1">
    <location>
        <begin position="407"/>
        <end position="427"/>
    </location>
</feature>
<feature type="transmembrane region" description="Helical" evidence="1">
    <location>
        <begin position="431"/>
        <end position="451"/>
    </location>
</feature>
<feature type="transmembrane region" description="Helical" evidence="1">
    <location>
        <begin position="487"/>
        <end position="507"/>
    </location>
</feature>
<protein>
    <recommendedName>
        <fullName evidence="1">NADH-quinone oxidoreductase subunit N</fullName>
        <ecNumber evidence="1">7.1.1.-</ecNumber>
    </recommendedName>
    <alternativeName>
        <fullName evidence="1">NADH dehydrogenase I subunit N</fullName>
    </alternativeName>
    <alternativeName>
        <fullName evidence="1">NDH-1 subunit N</fullName>
    </alternativeName>
</protein>
<name>NUON_MYXXD</name>
<organism>
    <name type="scientific">Myxococcus xanthus (strain DK1622)</name>
    <dbReference type="NCBI Taxonomy" id="246197"/>
    <lineage>
        <taxon>Bacteria</taxon>
        <taxon>Pseudomonadati</taxon>
        <taxon>Myxococcota</taxon>
        <taxon>Myxococcia</taxon>
        <taxon>Myxococcales</taxon>
        <taxon>Cystobacterineae</taxon>
        <taxon>Myxococcaceae</taxon>
        <taxon>Myxococcus</taxon>
    </lineage>
</organism>
<dbReference type="EC" id="7.1.1.-" evidence="1"/>
<dbReference type="EMBL" id="CP000113">
    <property type="protein sequence ID" value="ABF87238.1"/>
    <property type="molecule type" value="Genomic_DNA"/>
</dbReference>
<dbReference type="RefSeq" id="WP_011551200.1">
    <property type="nucleotide sequence ID" value="NC_008095.1"/>
</dbReference>
<dbReference type="SMR" id="Q1DDD3"/>
<dbReference type="STRING" id="246197.MXAN_1080"/>
<dbReference type="EnsemblBacteria" id="ABF87238">
    <property type="protein sequence ID" value="ABF87238"/>
    <property type="gene ID" value="MXAN_1080"/>
</dbReference>
<dbReference type="GeneID" id="41358531"/>
<dbReference type="KEGG" id="mxa:MXAN_1080"/>
<dbReference type="eggNOG" id="COG1007">
    <property type="taxonomic scope" value="Bacteria"/>
</dbReference>
<dbReference type="HOGENOM" id="CLU_007100_1_1_7"/>
<dbReference type="OrthoDB" id="9805769at2"/>
<dbReference type="Proteomes" id="UP000002402">
    <property type="component" value="Chromosome"/>
</dbReference>
<dbReference type="GO" id="GO:0005886">
    <property type="term" value="C:plasma membrane"/>
    <property type="evidence" value="ECO:0007669"/>
    <property type="project" value="UniProtKB-SubCell"/>
</dbReference>
<dbReference type="GO" id="GO:0008137">
    <property type="term" value="F:NADH dehydrogenase (ubiquinone) activity"/>
    <property type="evidence" value="ECO:0007669"/>
    <property type="project" value="InterPro"/>
</dbReference>
<dbReference type="GO" id="GO:0050136">
    <property type="term" value="F:NADH:ubiquinone reductase (non-electrogenic) activity"/>
    <property type="evidence" value="ECO:0007669"/>
    <property type="project" value="UniProtKB-UniRule"/>
</dbReference>
<dbReference type="GO" id="GO:0048038">
    <property type="term" value="F:quinone binding"/>
    <property type="evidence" value="ECO:0007669"/>
    <property type="project" value="UniProtKB-KW"/>
</dbReference>
<dbReference type="GO" id="GO:0042773">
    <property type="term" value="P:ATP synthesis coupled electron transport"/>
    <property type="evidence" value="ECO:0007669"/>
    <property type="project" value="InterPro"/>
</dbReference>
<dbReference type="HAMAP" id="MF_00445">
    <property type="entry name" value="NDH1_NuoN_1"/>
    <property type="match status" value="1"/>
</dbReference>
<dbReference type="InterPro" id="IPR010096">
    <property type="entry name" value="NADH-Q_OxRdtase_suN/2"/>
</dbReference>
<dbReference type="InterPro" id="IPR001750">
    <property type="entry name" value="ND/Mrp_TM"/>
</dbReference>
<dbReference type="PANTHER" id="PTHR22773">
    <property type="entry name" value="NADH DEHYDROGENASE"/>
    <property type="match status" value="1"/>
</dbReference>
<dbReference type="Pfam" id="PF00361">
    <property type="entry name" value="Proton_antipo_M"/>
    <property type="match status" value="2"/>
</dbReference>
<proteinExistence type="inferred from homology"/>
<comment type="function">
    <text evidence="1">NDH-1 shuttles electrons from NADH, via FMN and iron-sulfur (Fe-S) centers, to quinones in the respiratory chain. The immediate electron acceptor for the enzyme in this species is believed to be ubiquinone. Couples the redox reaction to proton translocation (for every two electrons transferred, four hydrogen ions are translocated across the cytoplasmic membrane), and thus conserves the redox energy in a proton gradient.</text>
</comment>
<comment type="catalytic activity">
    <reaction evidence="1">
        <text>a quinone + NADH + 5 H(+)(in) = a quinol + NAD(+) + 4 H(+)(out)</text>
        <dbReference type="Rhea" id="RHEA:57888"/>
        <dbReference type="ChEBI" id="CHEBI:15378"/>
        <dbReference type="ChEBI" id="CHEBI:24646"/>
        <dbReference type="ChEBI" id="CHEBI:57540"/>
        <dbReference type="ChEBI" id="CHEBI:57945"/>
        <dbReference type="ChEBI" id="CHEBI:132124"/>
    </reaction>
</comment>
<comment type="subunit">
    <text evidence="1">NDH-1 is composed of 14 different subunits. Subunits NuoA, H, J, K, L, M, N constitute the membrane sector of the complex.</text>
</comment>
<comment type="subcellular location">
    <subcellularLocation>
        <location evidence="1">Cell inner membrane</location>
        <topology evidence="1">Multi-pass membrane protein</topology>
    </subcellularLocation>
</comment>
<comment type="similarity">
    <text evidence="1">Belongs to the complex I subunit 2 family.</text>
</comment>
<reference key="1">
    <citation type="journal article" date="2006" name="Proc. Natl. Acad. Sci. U.S.A.">
        <title>Evolution of sensory complexity recorded in a myxobacterial genome.</title>
        <authorList>
            <person name="Goldman B.S."/>
            <person name="Nierman W.C."/>
            <person name="Kaiser D."/>
            <person name="Slater S.C."/>
            <person name="Durkin A.S."/>
            <person name="Eisen J.A."/>
            <person name="Ronning C.M."/>
            <person name="Barbazuk W.B."/>
            <person name="Blanchard M."/>
            <person name="Field C."/>
            <person name="Halling C."/>
            <person name="Hinkle G."/>
            <person name="Iartchuk O."/>
            <person name="Kim H.S."/>
            <person name="Mackenzie C."/>
            <person name="Madupu R."/>
            <person name="Miller N."/>
            <person name="Shvartsbeyn A."/>
            <person name="Sullivan S.A."/>
            <person name="Vaudin M."/>
            <person name="Wiegand R."/>
            <person name="Kaplan H.B."/>
        </authorList>
    </citation>
    <scope>NUCLEOTIDE SEQUENCE [LARGE SCALE GENOMIC DNA]</scope>
    <source>
        <strain>DK1622</strain>
    </source>
</reference>
<accession>Q1DDD3</accession>
<sequence length="519" mass="54859">MNLPNLSLADFLPLLPAIIMVVGASILLLSEVFLSTTASRAYQAVLTVVTAVAAGAMALTTMFEPPQEVMLGFGVMDPFSSFLTFVVCVGLGLATLSSVSFLRKRGAERGEFYALMLFASAGMSLLAMSNELITLFVNIEVLSLSTYALTSYLRRGTRPSEAGFKYFILGAFSSAVLLYGAALLYGATGTTHLTAMAGPLSTAMSSQPGLVYAGIILVITGFAFKVAAVPFHMWTPDVYEGAPTPVTALMSVGVKAAAFAAMVRVFFMVGKGVDPQMLLGLFSVLAFLTMVAGNLLAIPQRNVKRMLAYSSIAHAGYLLVGVAALFVTGPGEQFRLLGASALTGGTPLGLARAEALRGILYYLLAYTFSAVGAFAIVSVLERREDEEKGTAWDLERFSGLAQRKPGWAFAMAAFMLSLGGIPPTIGFMSKLLIFQAAVDAGLIGLTIVGVLSSAVGIYYYLRVVVYMFMRPVPEGAQALEKSWSTELALVLSTAAVVILGIIPGPIMGWLEQASSIFGQ</sequence>
<keyword id="KW-0997">Cell inner membrane</keyword>
<keyword id="KW-1003">Cell membrane</keyword>
<keyword id="KW-0472">Membrane</keyword>
<keyword id="KW-0520">NAD</keyword>
<keyword id="KW-0874">Quinone</keyword>
<keyword id="KW-1185">Reference proteome</keyword>
<keyword id="KW-1278">Translocase</keyword>
<keyword id="KW-0812">Transmembrane</keyword>
<keyword id="KW-1133">Transmembrane helix</keyword>
<keyword id="KW-0813">Transport</keyword>
<keyword id="KW-0830">Ubiquinone</keyword>
<evidence type="ECO:0000255" key="1">
    <source>
        <dbReference type="HAMAP-Rule" id="MF_00445"/>
    </source>
</evidence>